<evidence type="ECO:0000250" key="1"/>
<evidence type="ECO:0000255" key="2"/>
<evidence type="ECO:0000305" key="3"/>
<protein>
    <recommendedName>
        <fullName>Transcription elongation factor SPT4</fullName>
    </recommendedName>
    <alternativeName>
        <fullName>Chromatin elongation factor SPT4</fullName>
    </alternativeName>
</protein>
<sequence length="111" mass="12178">MSARSERACMLCGIIQPFRKFVDFGCPNCESVLHFQDNEDNQVQDCTSPSFEGLVALGDETKSPGGERLRIDSFVAGLYAVKINGKLPPHIIGDLADQNISYRPRDGSAED</sequence>
<comment type="function">
    <text evidence="1">The SPT4-SPT5 complex mediates both activation and inhibition of transcription elongation, and plays a role in pre-mRNA processing. This complex seems to be important for the stability of the RNA polymerase II elongation machinery on the chromatin template but not for the inherent ability of this machinery to translocate down the gene (By similarity).</text>
</comment>
<comment type="subunit">
    <text evidence="1">Component of the SPT4-SPT5 complex. Interacts with RNA polymerase II (By similarity).</text>
</comment>
<comment type="subcellular location">
    <subcellularLocation>
        <location evidence="1">Nucleus</location>
    </subcellularLocation>
    <subcellularLocation>
        <location evidence="1">Chromosome</location>
        <location evidence="1">Centromere</location>
    </subcellularLocation>
    <text evidence="1">Centromere and heterochromatin.</text>
</comment>
<comment type="similarity">
    <text evidence="3">Belongs to the SPT4 family.</text>
</comment>
<organism>
    <name type="scientific">Debaryomyces hansenii (strain ATCC 36239 / CBS 767 / BCRC 21394 / JCM 1990 / NBRC 0083 / IGC 2968)</name>
    <name type="common">Yeast</name>
    <name type="synonym">Torulaspora hansenii</name>
    <dbReference type="NCBI Taxonomy" id="284592"/>
    <lineage>
        <taxon>Eukaryota</taxon>
        <taxon>Fungi</taxon>
        <taxon>Dikarya</taxon>
        <taxon>Ascomycota</taxon>
        <taxon>Saccharomycotina</taxon>
        <taxon>Pichiomycetes</taxon>
        <taxon>Debaryomycetaceae</taxon>
        <taxon>Debaryomyces</taxon>
    </lineage>
</organism>
<dbReference type="EMBL" id="CR382139">
    <property type="protein sequence ID" value="CAR66008.1"/>
    <property type="molecule type" value="Genomic_DNA"/>
</dbReference>
<dbReference type="RefSeq" id="XP_002770676.1">
    <property type="nucleotide sequence ID" value="XM_002770630.1"/>
</dbReference>
<dbReference type="SMR" id="Q6BHA5"/>
<dbReference type="FunCoup" id="Q6BHA5">
    <property type="interactions" value="465"/>
</dbReference>
<dbReference type="STRING" id="284592.Q6BHA5"/>
<dbReference type="GeneID" id="8999261"/>
<dbReference type="KEGG" id="dha:DEHA2G20086g"/>
<dbReference type="VEuPathDB" id="FungiDB:DEHA2G20086g"/>
<dbReference type="eggNOG" id="KOG3490">
    <property type="taxonomic scope" value="Eukaryota"/>
</dbReference>
<dbReference type="HOGENOM" id="CLU_138052_2_1_1"/>
<dbReference type="InParanoid" id="Q6BHA5"/>
<dbReference type="OMA" id="FDGMIAV"/>
<dbReference type="OrthoDB" id="248751at2759"/>
<dbReference type="Proteomes" id="UP000000599">
    <property type="component" value="Chromosome G"/>
</dbReference>
<dbReference type="GO" id="GO:0000775">
    <property type="term" value="C:chromosome, centromeric region"/>
    <property type="evidence" value="ECO:0007669"/>
    <property type="project" value="UniProtKB-SubCell"/>
</dbReference>
<dbReference type="GO" id="GO:0032044">
    <property type="term" value="C:DSIF complex"/>
    <property type="evidence" value="ECO:0007669"/>
    <property type="project" value="EnsemblFungi"/>
</dbReference>
<dbReference type="GO" id="GO:0000993">
    <property type="term" value="F:RNA polymerase II complex binding"/>
    <property type="evidence" value="ECO:0007669"/>
    <property type="project" value="TreeGrafter"/>
</dbReference>
<dbReference type="GO" id="GO:0008270">
    <property type="term" value="F:zinc ion binding"/>
    <property type="evidence" value="ECO:0007669"/>
    <property type="project" value="UniProtKB-KW"/>
</dbReference>
<dbReference type="GO" id="GO:0006397">
    <property type="term" value="P:mRNA processing"/>
    <property type="evidence" value="ECO:0007669"/>
    <property type="project" value="UniProtKB-KW"/>
</dbReference>
<dbReference type="GO" id="GO:0006355">
    <property type="term" value="P:regulation of DNA-templated transcription"/>
    <property type="evidence" value="ECO:0007669"/>
    <property type="project" value="InterPro"/>
</dbReference>
<dbReference type="GO" id="GO:0140673">
    <property type="term" value="P:transcription elongation-coupled chromatin remodeling"/>
    <property type="evidence" value="ECO:0007669"/>
    <property type="project" value="InterPro"/>
</dbReference>
<dbReference type="CDD" id="cd07973">
    <property type="entry name" value="Spt4"/>
    <property type="match status" value="1"/>
</dbReference>
<dbReference type="Gene3D" id="3.30.40.210">
    <property type="match status" value="1"/>
</dbReference>
<dbReference type="InterPro" id="IPR029040">
    <property type="entry name" value="RPABC4/Spt4"/>
</dbReference>
<dbReference type="InterPro" id="IPR009287">
    <property type="entry name" value="Spt4"/>
</dbReference>
<dbReference type="InterPro" id="IPR022800">
    <property type="entry name" value="Spt4/RpoE2_Znf"/>
</dbReference>
<dbReference type="InterPro" id="IPR038510">
    <property type="entry name" value="Spt4_sf"/>
</dbReference>
<dbReference type="PANTHER" id="PTHR12882">
    <property type="entry name" value="SUPPRESSOR OF TY 4"/>
    <property type="match status" value="1"/>
</dbReference>
<dbReference type="PANTHER" id="PTHR12882:SF1">
    <property type="entry name" value="TRANSCRIPTION ELONGATION FACTOR SPT4"/>
    <property type="match status" value="1"/>
</dbReference>
<dbReference type="Pfam" id="PF06093">
    <property type="entry name" value="Spt4"/>
    <property type="match status" value="1"/>
</dbReference>
<dbReference type="PIRSF" id="PIRSF025023">
    <property type="entry name" value="Spt4"/>
    <property type="match status" value="1"/>
</dbReference>
<dbReference type="SMART" id="SM01389">
    <property type="entry name" value="Spt4"/>
    <property type="match status" value="1"/>
</dbReference>
<dbReference type="SUPFAM" id="SSF63393">
    <property type="entry name" value="RNA polymerase subunits"/>
    <property type="match status" value="1"/>
</dbReference>
<name>SPT4_DEBHA</name>
<accession>Q6BHA5</accession>
<accession>B5RUW4</accession>
<reference key="1">
    <citation type="journal article" date="2004" name="Nature">
        <title>Genome evolution in yeasts.</title>
        <authorList>
            <person name="Dujon B."/>
            <person name="Sherman D."/>
            <person name="Fischer G."/>
            <person name="Durrens P."/>
            <person name="Casaregola S."/>
            <person name="Lafontaine I."/>
            <person name="de Montigny J."/>
            <person name="Marck C."/>
            <person name="Neuveglise C."/>
            <person name="Talla E."/>
            <person name="Goffard N."/>
            <person name="Frangeul L."/>
            <person name="Aigle M."/>
            <person name="Anthouard V."/>
            <person name="Babour A."/>
            <person name="Barbe V."/>
            <person name="Barnay S."/>
            <person name="Blanchin S."/>
            <person name="Beckerich J.-M."/>
            <person name="Beyne E."/>
            <person name="Bleykasten C."/>
            <person name="Boisrame A."/>
            <person name="Boyer J."/>
            <person name="Cattolico L."/>
            <person name="Confanioleri F."/>
            <person name="de Daruvar A."/>
            <person name="Despons L."/>
            <person name="Fabre E."/>
            <person name="Fairhead C."/>
            <person name="Ferry-Dumazet H."/>
            <person name="Groppi A."/>
            <person name="Hantraye F."/>
            <person name="Hennequin C."/>
            <person name="Jauniaux N."/>
            <person name="Joyet P."/>
            <person name="Kachouri R."/>
            <person name="Kerrest A."/>
            <person name="Koszul R."/>
            <person name="Lemaire M."/>
            <person name="Lesur I."/>
            <person name="Ma L."/>
            <person name="Muller H."/>
            <person name="Nicaud J.-M."/>
            <person name="Nikolski M."/>
            <person name="Oztas S."/>
            <person name="Ozier-Kalogeropoulos O."/>
            <person name="Pellenz S."/>
            <person name="Potier S."/>
            <person name="Richard G.-F."/>
            <person name="Straub M.-L."/>
            <person name="Suleau A."/>
            <person name="Swennen D."/>
            <person name="Tekaia F."/>
            <person name="Wesolowski-Louvel M."/>
            <person name="Westhof E."/>
            <person name="Wirth B."/>
            <person name="Zeniou-Meyer M."/>
            <person name="Zivanovic Y."/>
            <person name="Bolotin-Fukuhara M."/>
            <person name="Thierry A."/>
            <person name="Bouchier C."/>
            <person name="Caudron B."/>
            <person name="Scarpelli C."/>
            <person name="Gaillardin C."/>
            <person name="Weissenbach J."/>
            <person name="Wincker P."/>
            <person name="Souciet J.-L."/>
        </authorList>
    </citation>
    <scope>NUCLEOTIDE SEQUENCE [LARGE SCALE GENOMIC DNA]</scope>
    <source>
        <strain>ATCC 36239 / CBS 767 / BCRC 21394 / JCM 1990 / NBRC 0083 / IGC 2968</strain>
    </source>
</reference>
<gene>
    <name type="primary">SPT4</name>
    <name type="ordered locus">DEHA2G20086g</name>
</gene>
<keyword id="KW-0137">Centromere</keyword>
<keyword id="KW-0158">Chromosome</keyword>
<keyword id="KW-0479">Metal-binding</keyword>
<keyword id="KW-0507">mRNA processing</keyword>
<keyword id="KW-0539">Nucleus</keyword>
<keyword id="KW-1185">Reference proteome</keyword>
<keyword id="KW-0804">Transcription</keyword>
<keyword id="KW-0862">Zinc</keyword>
<keyword id="KW-0863">Zinc-finger</keyword>
<proteinExistence type="inferred from homology"/>
<feature type="chain" id="PRO_0000238550" description="Transcription elongation factor SPT4">
    <location>
        <begin position="1"/>
        <end position="111"/>
    </location>
</feature>
<feature type="zinc finger region" description="C4-type" evidence="2">
    <location>
        <begin position="9"/>
        <end position="29"/>
    </location>
</feature>